<name>MENG_CORU7</name>
<dbReference type="EC" id="2.1.1.163" evidence="1"/>
<dbReference type="EMBL" id="AM942444">
    <property type="protein sequence ID" value="CAQ04223.1"/>
    <property type="molecule type" value="Genomic_DNA"/>
</dbReference>
<dbReference type="RefSeq" id="WP_012359529.1">
    <property type="nucleotide sequence ID" value="NC_010545.1"/>
</dbReference>
<dbReference type="SMR" id="B1VEN4"/>
<dbReference type="STRING" id="504474.cu0263"/>
<dbReference type="KEGG" id="cur:cu0263"/>
<dbReference type="eggNOG" id="COG2226">
    <property type="taxonomic scope" value="Bacteria"/>
</dbReference>
<dbReference type="HOGENOM" id="CLU_037990_0_0_11"/>
<dbReference type="UniPathway" id="UPA00079">
    <property type="reaction ID" value="UER00169"/>
</dbReference>
<dbReference type="Proteomes" id="UP000001727">
    <property type="component" value="Chromosome"/>
</dbReference>
<dbReference type="GO" id="GO:0043770">
    <property type="term" value="F:demethylmenaquinone methyltransferase activity"/>
    <property type="evidence" value="ECO:0007669"/>
    <property type="project" value="UniProtKB-UniRule"/>
</dbReference>
<dbReference type="GO" id="GO:0009234">
    <property type="term" value="P:menaquinone biosynthetic process"/>
    <property type="evidence" value="ECO:0007669"/>
    <property type="project" value="UniProtKB-UniRule"/>
</dbReference>
<dbReference type="GO" id="GO:0032259">
    <property type="term" value="P:methylation"/>
    <property type="evidence" value="ECO:0007669"/>
    <property type="project" value="UniProtKB-KW"/>
</dbReference>
<dbReference type="CDD" id="cd02440">
    <property type="entry name" value="AdoMet_MTases"/>
    <property type="match status" value="1"/>
</dbReference>
<dbReference type="Gene3D" id="3.40.50.150">
    <property type="entry name" value="Vaccinia Virus protein VP39"/>
    <property type="match status" value="1"/>
</dbReference>
<dbReference type="HAMAP" id="MF_01813">
    <property type="entry name" value="MenG_UbiE_methyltr"/>
    <property type="match status" value="1"/>
</dbReference>
<dbReference type="InterPro" id="IPR029063">
    <property type="entry name" value="SAM-dependent_MTases_sf"/>
</dbReference>
<dbReference type="InterPro" id="IPR004033">
    <property type="entry name" value="UbiE/COQ5_MeTrFase"/>
</dbReference>
<dbReference type="InterPro" id="IPR023576">
    <property type="entry name" value="UbiE/COQ5_MeTrFase_CS"/>
</dbReference>
<dbReference type="NCBIfam" id="TIGR01934">
    <property type="entry name" value="MenG_MenH_UbiE"/>
    <property type="match status" value="1"/>
</dbReference>
<dbReference type="NCBIfam" id="NF001241">
    <property type="entry name" value="PRK00216.1-2"/>
    <property type="match status" value="1"/>
</dbReference>
<dbReference type="PANTHER" id="PTHR43591:SF24">
    <property type="entry name" value="2-METHOXY-6-POLYPRENYL-1,4-BENZOQUINOL METHYLASE, MITOCHONDRIAL"/>
    <property type="match status" value="1"/>
</dbReference>
<dbReference type="PANTHER" id="PTHR43591">
    <property type="entry name" value="METHYLTRANSFERASE"/>
    <property type="match status" value="1"/>
</dbReference>
<dbReference type="Pfam" id="PF01209">
    <property type="entry name" value="Ubie_methyltran"/>
    <property type="match status" value="1"/>
</dbReference>
<dbReference type="SUPFAM" id="SSF53335">
    <property type="entry name" value="S-adenosyl-L-methionine-dependent methyltransferases"/>
    <property type="match status" value="1"/>
</dbReference>
<dbReference type="PROSITE" id="PS51608">
    <property type="entry name" value="SAM_MT_UBIE"/>
    <property type="match status" value="1"/>
</dbReference>
<dbReference type="PROSITE" id="PS01183">
    <property type="entry name" value="UBIE_1"/>
    <property type="match status" value="1"/>
</dbReference>
<dbReference type="PROSITE" id="PS01184">
    <property type="entry name" value="UBIE_2"/>
    <property type="match status" value="1"/>
</dbReference>
<comment type="function">
    <text evidence="1">Methyltransferase required for the conversion of demethylmenaquinol (DMKH2) to menaquinol (MKH2).</text>
</comment>
<comment type="catalytic activity">
    <reaction evidence="1">
        <text>a 2-demethylmenaquinol + S-adenosyl-L-methionine = a menaquinol + S-adenosyl-L-homocysteine + H(+)</text>
        <dbReference type="Rhea" id="RHEA:42640"/>
        <dbReference type="Rhea" id="RHEA-COMP:9539"/>
        <dbReference type="Rhea" id="RHEA-COMP:9563"/>
        <dbReference type="ChEBI" id="CHEBI:15378"/>
        <dbReference type="ChEBI" id="CHEBI:18151"/>
        <dbReference type="ChEBI" id="CHEBI:55437"/>
        <dbReference type="ChEBI" id="CHEBI:57856"/>
        <dbReference type="ChEBI" id="CHEBI:59789"/>
        <dbReference type="EC" id="2.1.1.163"/>
    </reaction>
</comment>
<comment type="pathway">
    <text evidence="1">Quinol/quinone metabolism; menaquinone biosynthesis; menaquinol from 1,4-dihydroxy-2-naphthoate: step 2/2.</text>
</comment>
<comment type="similarity">
    <text evidence="1">Belongs to the class I-like SAM-binding methyltransferase superfamily. MenG/UbiE family.</text>
</comment>
<protein>
    <recommendedName>
        <fullName evidence="1">Demethylmenaquinone methyltransferase</fullName>
        <ecNumber evidence="1">2.1.1.163</ecNumber>
    </recommendedName>
</protein>
<gene>
    <name evidence="1" type="primary">menG</name>
    <name type="ordered locus">cu0263</name>
</gene>
<organism>
    <name type="scientific">Corynebacterium urealyticum (strain ATCC 43042 / DSM 7109)</name>
    <dbReference type="NCBI Taxonomy" id="504474"/>
    <lineage>
        <taxon>Bacteria</taxon>
        <taxon>Bacillati</taxon>
        <taxon>Actinomycetota</taxon>
        <taxon>Actinomycetes</taxon>
        <taxon>Mycobacteriales</taxon>
        <taxon>Corynebacteriaceae</taxon>
        <taxon>Corynebacterium</taxon>
    </lineage>
</organism>
<sequence>MSRASLEKDPREVATMFDAVGKNYDITNTVLSFGQDRLWRKRTRRRLDLAPGDKVLDLAAGTGVSTEELAESGAYCVAADFSLGMLRAGSHRDVPMICADGLNLPFADNTFDAVTISYGLRNLVDFRAGLREMARVTKPGGKLAIAEFSTPVIPGFATVYKEYLMRALPAVAKVVSSNPESYVYLAESIRAWPDQEELAREIRANGWENVGWQNLTGGIVALHSGTKPLD</sequence>
<keyword id="KW-0474">Menaquinone biosynthesis</keyword>
<keyword id="KW-0489">Methyltransferase</keyword>
<keyword id="KW-1185">Reference proteome</keyword>
<keyword id="KW-0949">S-adenosyl-L-methionine</keyword>
<keyword id="KW-0808">Transferase</keyword>
<proteinExistence type="inferred from homology"/>
<accession>B1VEN4</accession>
<reference key="1">
    <citation type="journal article" date="2008" name="J. Biotechnol.">
        <title>The lifestyle of Corynebacterium urealyticum derived from its complete genome sequence established by pyrosequencing.</title>
        <authorList>
            <person name="Tauch A."/>
            <person name="Trost E."/>
            <person name="Tilker A."/>
            <person name="Ludewig U."/>
            <person name="Schneiker S."/>
            <person name="Goesmann A."/>
            <person name="Arnold W."/>
            <person name="Bekel T."/>
            <person name="Brinkrolf K."/>
            <person name="Brune I."/>
            <person name="Goetker S."/>
            <person name="Kalinowski J."/>
            <person name="Kamp P.-B."/>
            <person name="Lobo F.P."/>
            <person name="Viehoever P."/>
            <person name="Weisshaar B."/>
            <person name="Soriano F."/>
            <person name="Droege M."/>
            <person name="Puehler A."/>
        </authorList>
    </citation>
    <scope>NUCLEOTIDE SEQUENCE [LARGE SCALE GENOMIC DNA]</scope>
    <source>
        <strain>ATCC 43042 / DSM 7109</strain>
    </source>
</reference>
<evidence type="ECO:0000255" key="1">
    <source>
        <dbReference type="HAMAP-Rule" id="MF_01813"/>
    </source>
</evidence>
<feature type="chain" id="PRO_1000187748" description="Demethylmenaquinone methyltransferase">
    <location>
        <begin position="1"/>
        <end position="230"/>
    </location>
</feature>
<feature type="binding site" evidence="1">
    <location>
        <position position="62"/>
    </location>
    <ligand>
        <name>S-adenosyl-L-methionine</name>
        <dbReference type="ChEBI" id="CHEBI:59789"/>
    </ligand>
</feature>
<feature type="binding site" evidence="1">
    <location>
        <position position="80"/>
    </location>
    <ligand>
        <name>S-adenosyl-L-methionine</name>
        <dbReference type="ChEBI" id="CHEBI:59789"/>
    </ligand>
</feature>
<feature type="binding site" evidence="1">
    <location>
        <begin position="100"/>
        <end position="101"/>
    </location>
    <ligand>
        <name>S-adenosyl-L-methionine</name>
        <dbReference type="ChEBI" id="CHEBI:59789"/>
    </ligand>
</feature>
<feature type="binding site" evidence="1">
    <location>
        <position position="117"/>
    </location>
    <ligand>
        <name>S-adenosyl-L-methionine</name>
        <dbReference type="ChEBI" id="CHEBI:59789"/>
    </ligand>
</feature>